<proteinExistence type="inferred from homology"/>
<sequence>MLLAERVEQSEHDAGWSAHLQLRFVEGGGVTRLGARRHFGPLLVQRPFYPEGAPCHVYVLHPPGGIVAGDRLELDIHLEPGSHALLTMPGASKFYRSIGPTARLTQRFHLQAGSTLEWLPQDSIFFSGARASLDSRFTLEPGARLLAWETLCLGRPVMGERFDQGALDSRLSIELPDDPGLHERLRISGGQLEKLGGHPLLATFCASPADPSVLEKVRHLLDELKTPAGATLLGSLLVIRLLDHDNQHLQHTLQRLWHVLRPAVLGLPACPPRIWAT</sequence>
<comment type="function">
    <text evidence="1">Required for maturation of urease via the functional incorporation of the urease nickel metallocenter.</text>
</comment>
<comment type="subunit">
    <text evidence="1">UreD, UreF and UreG form a complex that acts as a GTP-hydrolysis-dependent molecular chaperone, activating the urease apoprotein by helping to assemble the nickel containing metallocenter of UreC. The UreE protein probably delivers the nickel.</text>
</comment>
<comment type="subcellular location">
    <subcellularLocation>
        <location evidence="1">Cytoplasm</location>
    </subcellularLocation>
</comment>
<comment type="similarity">
    <text evidence="1">Belongs to the UreD family.</text>
</comment>
<accession>B1J812</accession>
<reference key="1">
    <citation type="submission" date="2008-02" db="EMBL/GenBank/DDBJ databases">
        <title>Complete sequence of Pseudomonas putida W619.</title>
        <authorList>
            <person name="Copeland A."/>
            <person name="Lucas S."/>
            <person name="Lapidus A."/>
            <person name="Barry K."/>
            <person name="Detter J.C."/>
            <person name="Glavina del Rio T."/>
            <person name="Dalin E."/>
            <person name="Tice H."/>
            <person name="Pitluck S."/>
            <person name="Chain P."/>
            <person name="Malfatti S."/>
            <person name="Shin M."/>
            <person name="Vergez L."/>
            <person name="Schmutz J."/>
            <person name="Larimer F."/>
            <person name="Land M."/>
            <person name="Hauser L."/>
            <person name="Kyrpides N."/>
            <person name="Kim E."/>
            <person name="Taghavi S."/>
            <person name="Vangronsveld D."/>
            <person name="van der Lelie D."/>
            <person name="Richardson P."/>
        </authorList>
    </citation>
    <scope>NUCLEOTIDE SEQUENCE [LARGE SCALE GENOMIC DNA]</scope>
    <source>
        <strain>W619</strain>
    </source>
</reference>
<dbReference type="EMBL" id="CP000949">
    <property type="protein sequence ID" value="ACA72914.1"/>
    <property type="molecule type" value="Genomic_DNA"/>
</dbReference>
<dbReference type="SMR" id="B1J812"/>
<dbReference type="STRING" id="390235.PputW619_2414"/>
<dbReference type="KEGG" id="ppw:PputW619_2414"/>
<dbReference type="eggNOG" id="COG0829">
    <property type="taxonomic scope" value="Bacteria"/>
</dbReference>
<dbReference type="HOGENOM" id="CLU_056339_0_0_6"/>
<dbReference type="OrthoDB" id="9798842at2"/>
<dbReference type="GO" id="GO:0005737">
    <property type="term" value="C:cytoplasm"/>
    <property type="evidence" value="ECO:0007669"/>
    <property type="project" value="UniProtKB-SubCell"/>
</dbReference>
<dbReference type="GO" id="GO:0016151">
    <property type="term" value="F:nickel cation binding"/>
    <property type="evidence" value="ECO:0007669"/>
    <property type="project" value="UniProtKB-UniRule"/>
</dbReference>
<dbReference type="HAMAP" id="MF_01384">
    <property type="entry name" value="UreD"/>
    <property type="match status" value="1"/>
</dbReference>
<dbReference type="InterPro" id="IPR002669">
    <property type="entry name" value="UreD"/>
</dbReference>
<dbReference type="PANTHER" id="PTHR33643">
    <property type="entry name" value="UREASE ACCESSORY PROTEIN D"/>
    <property type="match status" value="1"/>
</dbReference>
<dbReference type="PANTHER" id="PTHR33643:SF1">
    <property type="entry name" value="UREASE ACCESSORY PROTEIN D"/>
    <property type="match status" value="1"/>
</dbReference>
<dbReference type="Pfam" id="PF01774">
    <property type="entry name" value="UreD"/>
    <property type="match status" value="1"/>
</dbReference>
<feature type="chain" id="PRO_1000145096" description="Urease accessory protein UreD">
    <location>
        <begin position="1"/>
        <end position="277"/>
    </location>
</feature>
<protein>
    <recommendedName>
        <fullName evidence="1">Urease accessory protein UreD</fullName>
    </recommendedName>
</protein>
<name>URED_PSEPW</name>
<keyword id="KW-0143">Chaperone</keyword>
<keyword id="KW-0963">Cytoplasm</keyword>
<keyword id="KW-0996">Nickel insertion</keyword>
<evidence type="ECO:0000255" key="1">
    <source>
        <dbReference type="HAMAP-Rule" id="MF_01384"/>
    </source>
</evidence>
<gene>
    <name evidence="1" type="primary">ureD</name>
    <name type="ordered locus">PputW619_2414</name>
</gene>
<organism>
    <name type="scientific">Pseudomonas putida (strain W619)</name>
    <dbReference type="NCBI Taxonomy" id="390235"/>
    <lineage>
        <taxon>Bacteria</taxon>
        <taxon>Pseudomonadati</taxon>
        <taxon>Pseudomonadota</taxon>
        <taxon>Gammaproteobacteria</taxon>
        <taxon>Pseudomonadales</taxon>
        <taxon>Pseudomonadaceae</taxon>
        <taxon>Pseudomonas</taxon>
    </lineage>
</organism>